<accession>Q24UK0</accession>
<sequence>MKKIRVFVSGAGGKMGREVVRTILDQEDMQLVGASDARQQGRDIGELLAMAPLGIEITGPLEVAHLKETRADIMVDFTNPQSVLKNAKCALAAGVVPVLGTTGLDEADISEIRDLVDQTKVGAFIAPNFAIGAILMMRFAQEAAKYFPHVEIIELHHDQKLDAPSGTALKTVEWISEVRKPLVQGHPNEYEKIKGSRGGDVDGIHIHSVRLPGFIAHQEVIFGGLGQALTIRHDALSRETYMPGIMLAVRKASQLSNLVIGLENFLE</sequence>
<dbReference type="EC" id="1.17.1.8" evidence="1"/>
<dbReference type="EMBL" id="AP008230">
    <property type="protein sequence ID" value="BAE84292.1"/>
    <property type="molecule type" value="Genomic_DNA"/>
</dbReference>
<dbReference type="RefSeq" id="WP_005808837.1">
    <property type="nucleotide sequence ID" value="NC_007907.1"/>
</dbReference>
<dbReference type="SMR" id="Q24UK0"/>
<dbReference type="STRING" id="138119.DSY2503"/>
<dbReference type="KEGG" id="dsy:DSY2503"/>
<dbReference type="eggNOG" id="COG0289">
    <property type="taxonomic scope" value="Bacteria"/>
</dbReference>
<dbReference type="HOGENOM" id="CLU_047479_0_1_9"/>
<dbReference type="UniPathway" id="UPA00034">
    <property type="reaction ID" value="UER00018"/>
</dbReference>
<dbReference type="Proteomes" id="UP000001946">
    <property type="component" value="Chromosome"/>
</dbReference>
<dbReference type="GO" id="GO:0005829">
    <property type="term" value="C:cytosol"/>
    <property type="evidence" value="ECO:0007669"/>
    <property type="project" value="TreeGrafter"/>
</dbReference>
<dbReference type="GO" id="GO:0008839">
    <property type="term" value="F:4-hydroxy-tetrahydrodipicolinate reductase"/>
    <property type="evidence" value="ECO:0007669"/>
    <property type="project" value="UniProtKB-EC"/>
</dbReference>
<dbReference type="GO" id="GO:0051287">
    <property type="term" value="F:NAD binding"/>
    <property type="evidence" value="ECO:0007669"/>
    <property type="project" value="UniProtKB-UniRule"/>
</dbReference>
<dbReference type="GO" id="GO:0050661">
    <property type="term" value="F:NADP binding"/>
    <property type="evidence" value="ECO:0007669"/>
    <property type="project" value="UniProtKB-UniRule"/>
</dbReference>
<dbReference type="GO" id="GO:0016726">
    <property type="term" value="F:oxidoreductase activity, acting on CH or CH2 groups, NAD or NADP as acceptor"/>
    <property type="evidence" value="ECO:0007669"/>
    <property type="project" value="UniProtKB-UniRule"/>
</dbReference>
<dbReference type="GO" id="GO:0019877">
    <property type="term" value="P:diaminopimelate biosynthetic process"/>
    <property type="evidence" value="ECO:0007669"/>
    <property type="project" value="UniProtKB-UniRule"/>
</dbReference>
<dbReference type="GO" id="GO:0009089">
    <property type="term" value="P:lysine biosynthetic process via diaminopimelate"/>
    <property type="evidence" value="ECO:0007669"/>
    <property type="project" value="UniProtKB-UniRule"/>
</dbReference>
<dbReference type="CDD" id="cd02274">
    <property type="entry name" value="DHDPR_N"/>
    <property type="match status" value="1"/>
</dbReference>
<dbReference type="FunFam" id="3.30.360.10:FF:000009">
    <property type="entry name" value="4-hydroxy-tetrahydrodipicolinate reductase"/>
    <property type="match status" value="1"/>
</dbReference>
<dbReference type="Gene3D" id="3.30.360.10">
    <property type="entry name" value="Dihydrodipicolinate Reductase, domain 2"/>
    <property type="match status" value="1"/>
</dbReference>
<dbReference type="Gene3D" id="3.40.50.720">
    <property type="entry name" value="NAD(P)-binding Rossmann-like Domain"/>
    <property type="match status" value="1"/>
</dbReference>
<dbReference type="HAMAP" id="MF_00102">
    <property type="entry name" value="DapB"/>
    <property type="match status" value="1"/>
</dbReference>
<dbReference type="InterPro" id="IPR022663">
    <property type="entry name" value="DapB_C"/>
</dbReference>
<dbReference type="InterPro" id="IPR000846">
    <property type="entry name" value="DapB_N"/>
</dbReference>
<dbReference type="InterPro" id="IPR022664">
    <property type="entry name" value="DapB_N_CS"/>
</dbReference>
<dbReference type="InterPro" id="IPR023940">
    <property type="entry name" value="DHDPR_bac"/>
</dbReference>
<dbReference type="InterPro" id="IPR036291">
    <property type="entry name" value="NAD(P)-bd_dom_sf"/>
</dbReference>
<dbReference type="NCBIfam" id="TIGR00036">
    <property type="entry name" value="dapB"/>
    <property type="match status" value="1"/>
</dbReference>
<dbReference type="PANTHER" id="PTHR20836:SF0">
    <property type="entry name" value="4-HYDROXY-TETRAHYDRODIPICOLINATE REDUCTASE 1, CHLOROPLASTIC-RELATED"/>
    <property type="match status" value="1"/>
</dbReference>
<dbReference type="PANTHER" id="PTHR20836">
    <property type="entry name" value="DIHYDRODIPICOLINATE REDUCTASE"/>
    <property type="match status" value="1"/>
</dbReference>
<dbReference type="Pfam" id="PF05173">
    <property type="entry name" value="DapB_C"/>
    <property type="match status" value="1"/>
</dbReference>
<dbReference type="Pfam" id="PF01113">
    <property type="entry name" value="DapB_N"/>
    <property type="match status" value="1"/>
</dbReference>
<dbReference type="PIRSF" id="PIRSF000161">
    <property type="entry name" value="DHPR"/>
    <property type="match status" value="1"/>
</dbReference>
<dbReference type="SUPFAM" id="SSF55347">
    <property type="entry name" value="Glyceraldehyde-3-phosphate dehydrogenase-like, C-terminal domain"/>
    <property type="match status" value="1"/>
</dbReference>
<dbReference type="SUPFAM" id="SSF51735">
    <property type="entry name" value="NAD(P)-binding Rossmann-fold domains"/>
    <property type="match status" value="1"/>
</dbReference>
<dbReference type="PROSITE" id="PS01298">
    <property type="entry name" value="DAPB"/>
    <property type="match status" value="1"/>
</dbReference>
<name>DAPB_DESHY</name>
<gene>
    <name evidence="1" type="primary">dapB</name>
    <name type="ordered locus">DSY2503</name>
</gene>
<organism>
    <name type="scientific">Desulfitobacterium hafniense (strain Y51)</name>
    <dbReference type="NCBI Taxonomy" id="138119"/>
    <lineage>
        <taxon>Bacteria</taxon>
        <taxon>Bacillati</taxon>
        <taxon>Bacillota</taxon>
        <taxon>Clostridia</taxon>
        <taxon>Eubacteriales</taxon>
        <taxon>Desulfitobacteriaceae</taxon>
        <taxon>Desulfitobacterium</taxon>
    </lineage>
</organism>
<feature type="chain" id="PRO_1000075676" description="4-hydroxy-tetrahydrodipicolinate reductase">
    <location>
        <begin position="1"/>
        <end position="267"/>
    </location>
</feature>
<feature type="active site" description="Proton donor/acceptor" evidence="1">
    <location>
        <position position="156"/>
    </location>
</feature>
<feature type="active site" description="Proton donor" evidence="1">
    <location>
        <position position="160"/>
    </location>
</feature>
<feature type="binding site" evidence="1">
    <location>
        <begin position="10"/>
        <end position="15"/>
    </location>
    <ligand>
        <name>NAD(+)</name>
        <dbReference type="ChEBI" id="CHEBI:57540"/>
    </ligand>
</feature>
<feature type="binding site" evidence="1">
    <location>
        <position position="38"/>
    </location>
    <ligand>
        <name>NADP(+)</name>
        <dbReference type="ChEBI" id="CHEBI:58349"/>
    </ligand>
</feature>
<feature type="binding site" evidence="1">
    <location>
        <begin position="100"/>
        <end position="102"/>
    </location>
    <ligand>
        <name>NAD(+)</name>
        <dbReference type="ChEBI" id="CHEBI:57540"/>
    </ligand>
</feature>
<feature type="binding site" evidence="1">
    <location>
        <begin position="126"/>
        <end position="129"/>
    </location>
    <ligand>
        <name>NAD(+)</name>
        <dbReference type="ChEBI" id="CHEBI:57540"/>
    </ligand>
</feature>
<feature type="binding site" evidence="1">
    <location>
        <position position="157"/>
    </location>
    <ligand>
        <name>(S)-2,3,4,5-tetrahydrodipicolinate</name>
        <dbReference type="ChEBI" id="CHEBI:16845"/>
    </ligand>
</feature>
<feature type="binding site" evidence="1">
    <location>
        <begin position="166"/>
        <end position="167"/>
    </location>
    <ligand>
        <name>(S)-2,3,4,5-tetrahydrodipicolinate</name>
        <dbReference type="ChEBI" id="CHEBI:16845"/>
    </ligand>
</feature>
<proteinExistence type="inferred from homology"/>
<comment type="function">
    <text evidence="1">Catalyzes the conversion of 4-hydroxy-tetrahydrodipicolinate (HTPA) to tetrahydrodipicolinate.</text>
</comment>
<comment type="catalytic activity">
    <reaction evidence="1">
        <text>(S)-2,3,4,5-tetrahydrodipicolinate + NAD(+) + H2O = (2S,4S)-4-hydroxy-2,3,4,5-tetrahydrodipicolinate + NADH + H(+)</text>
        <dbReference type="Rhea" id="RHEA:35323"/>
        <dbReference type="ChEBI" id="CHEBI:15377"/>
        <dbReference type="ChEBI" id="CHEBI:15378"/>
        <dbReference type="ChEBI" id="CHEBI:16845"/>
        <dbReference type="ChEBI" id="CHEBI:57540"/>
        <dbReference type="ChEBI" id="CHEBI:57945"/>
        <dbReference type="ChEBI" id="CHEBI:67139"/>
        <dbReference type="EC" id="1.17.1.8"/>
    </reaction>
</comment>
<comment type="catalytic activity">
    <reaction evidence="1">
        <text>(S)-2,3,4,5-tetrahydrodipicolinate + NADP(+) + H2O = (2S,4S)-4-hydroxy-2,3,4,5-tetrahydrodipicolinate + NADPH + H(+)</text>
        <dbReference type="Rhea" id="RHEA:35331"/>
        <dbReference type="ChEBI" id="CHEBI:15377"/>
        <dbReference type="ChEBI" id="CHEBI:15378"/>
        <dbReference type="ChEBI" id="CHEBI:16845"/>
        <dbReference type="ChEBI" id="CHEBI:57783"/>
        <dbReference type="ChEBI" id="CHEBI:58349"/>
        <dbReference type="ChEBI" id="CHEBI:67139"/>
        <dbReference type="EC" id="1.17.1.8"/>
    </reaction>
</comment>
<comment type="pathway">
    <text evidence="1">Amino-acid biosynthesis; L-lysine biosynthesis via DAP pathway; (S)-tetrahydrodipicolinate from L-aspartate: step 4/4.</text>
</comment>
<comment type="subcellular location">
    <subcellularLocation>
        <location evidence="1">Cytoplasm</location>
    </subcellularLocation>
</comment>
<comment type="similarity">
    <text evidence="1">Belongs to the DapB family.</text>
</comment>
<comment type="caution">
    <text evidence="2">Was originally thought to be a dihydrodipicolinate reductase (DHDPR), catalyzing the conversion of dihydrodipicolinate to tetrahydrodipicolinate. However, it was shown in E.coli that the substrate of the enzymatic reaction is not dihydrodipicolinate (DHDP) but in fact (2S,4S)-4-hydroxy-2,3,4,5-tetrahydrodipicolinic acid (HTPA), the product released by the DapA-catalyzed reaction.</text>
</comment>
<protein>
    <recommendedName>
        <fullName evidence="1">4-hydroxy-tetrahydrodipicolinate reductase</fullName>
        <shortName evidence="1">HTPA reductase</shortName>
        <ecNumber evidence="1">1.17.1.8</ecNumber>
    </recommendedName>
</protein>
<keyword id="KW-0028">Amino-acid biosynthesis</keyword>
<keyword id="KW-0963">Cytoplasm</keyword>
<keyword id="KW-0220">Diaminopimelate biosynthesis</keyword>
<keyword id="KW-0457">Lysine biosynthesis</keyword>
<keyword id="KW-0520">NAD</keyword>
<keyword id="KW-0521">NADP</keyword>
<keyword id="KW-0560">Oxidoreductase</keyword>
<keyword id="KW-1185">Reference proteome</keyword>
<evidence type="ECO:0000255" key="1">
    <source>
        <dbReference type="HAMAP-Rule" id="MF_00102"/>
    </source>
</evidence>
<evidence type="ECO:0000305" key="2"/>
<reference key="1">
    <citation type="journal article" date="2006" name="J. Bacteriol.">
        <title>Complete genome sequence of the dehalorespiring bacterium Desulfitobacterium hafniense Y51 and comparison with Dehalococcoides ethenogenes 195.</title>
        <authorList>
            <person name="Nonaka H."/>
            <person name="Keresztes G."/>
            <person name="Shinoda Y."/>
            <person name="Ikenaga Y."/>
            <person name="Abe M."/>
            <person name="Naito K."/>
            <person name="Inatomi K."/>
            <person name="Furukawa K."/>
            <person name="Inui M."/>
            <person name="Yukawa H."/>
        </authorList>
    </citation>
    <scope>NUCLEOTIDE SEQUENCE [LARGE SCALE GENOMIC DNA]</scope>
    <source>
        <strain>Y51</strain>
    </source>
</reference>